<name>MED6_CRYNJ</name>
<proteinExistence type="inferred from homology"/>
<accession>P0CO74</accession>
<accession>Q560B9</accession>
<accession>Q5KPC2</accession>
<keyword id="KW-0010">Activator</keyword>
<keyword id="KW-0539">Nucleus</keyword>
<keyword id="KW-1185">Reference proteome</keyword>
<keyword id="KW-0804">Transcription</keyword>
<keyword id="KW-0805">Transcription regulation</keyword>
<comment type="function">
    <text evidence="1">Component of the Mediator complex, a coactivator involved in the regulated transcription of nearly all RNA polymerase II-dependent genes. Mediator functions as a bridge to convey information from gene-specific regulatory proteins to the basal RNA polymerase II transcription machinery. Mediator is recruited to promoters by direct interactions with regulatory proteins and serves as a scaffold for the assembly of a functional preinitiation complex with RNA polymerase II and the general transcription factors (By similarity).</text>
</comment>
<comment type="subunit">
    <text evidence="1">Component of the Mediator complex.</text>
</comment>
<comment type="subcellular location">
    <subcellularLocation>
        <location evidence="1">Nucleus</location>
    </subcellularLocation>
</comment>
<comment type="similarity">
    <text evidence="3">Belongs to the Mediator complex subunit 6 family.</text>
</comment>
<evidence type="ECO:0000250" key="1"/>
<evidence type="ECO:0000256" key="2">
    <source>
        <dbReference type="SAM" id="MobiDB-lite"/>
    </source>
</evidence>
<evidence type="ECO:0000305" key="3"/>
<sequence>MAQQVEEIEQDLSHIHWSWPEAIAANPARSLATPDLAMDYFAYSPFWDAKSNNNVLRTQRRIENPAYGHAEEKVELNAFMSGFEYVVAHSQPPDLFVIHRREVESSGKRDRVTGAWFILHEKIYQCPTLFDVMSTRLKNATSLISKTLSTLSENRPPANPRTTTLWRSIPSVTSNQPDGTQPSSLDQAEKPDEGKKDDSLNGSSPLDGSDGKASPAGPDWHLFHALQATRASLVSLETLAKTPTQTTDPREELNNIEIAMDNQFGGQNQSLSGKGPNVKGGAAAVKNISVPFVPKHSAGHATSTTGLTPSIWGGSASLGVSTAAVPAREAGGSPLKWPGGDKSAPIAGATLAGQTGR</sequence>
<organism>
    <name type="scientific">Cryptococcus neoformans var. neoformans serotype D (strain JEC21 / ATCC MYA-565)</name>
    <name type="common">Filobasidiella neoformans</name>
    <dbReference type="NCBI Taxonomy" id="214684"/>
    <lineage>
        <taxon>Eukaryota</taxon>
        <taxon>Fungi</taxon>
        <taxon>Dikarya</taxon>
        <taxon>Basidiomycota</taxon>
        <taxon>Agaricomycotina</taxon>
        <taxon>Tremellomycetes</taxon>
        <taxon>Tremellales</taxon>
        <taxon>Cryptococcaceae</taxon>
        <taxon>Cryptococcus</taxon>
        <taxon>Cryptococcus neoformans species complex</taxon>
    </lineage>
</organism>
<feature type="chain" id="PRO_0000303056" description="Mediator of RNA polymerase II transcription subunit 6">
    <location>
        <begin position="1"/>
        <end position="357"/>
    </location>
</feature>
<feature type="region of interest" description="Disordered" evidence="2">
    <location>
        <begin position="151"/>
        <end position="219"/>
    </location>
</feature>
<feature type="region of interest" description="Disordered" evidence="2">
    <location>
        <begin position="323"/>
        <end position="357"/>
    </location>
</feature>
<feature type="compositionally biased region" description="Polar residues" evidence="2">
    <location>
        <begin position="160"/>
        <end position="186"/>
    </location>
</feature>
<feature type="compositionally biased region" description="Basic and acidic residues" evidence="2">
    <location>
        <begin position="187"/>
        <end position="199"/>
    </location>
</feature>
<dbReference type="EMBL" id="AE017341">
    <property type="protein sequence ID" value="AAW40843.1"/>
    <property type="molecule type" value="Genomic_DNA"/>
</dbReference>
<dbReference type="RefSeq" id="XP_566662.1">
    <property type="nucleotide sequence ID" value="XM_566662.1"/>
</dbReference>
<dbReference type="SMR" id="P0CO74"/>
<dbReference type="STRING" id="214684.P0CO74"/>
<dbReference type="PaxDb" id="214684-P0CO74"/>
<dbReference type="EnsemblFungi" id="AAW40843">
    <property type="protein sequence ID" value="AAW40843"/>
    <property type="gene ID" value="CNA03340"/>
</dbReference>
<dbReference type="GeneID" id="3254009"/>
<dbReference type="KEGG" id="cne:CNA03340"/>
<dbReference type="VEuPathDB" id="FungiDB:CNA03340"/>
<dbReference type="eggNOG" id="KOG3169">
    <property type="taxonomic scope" value="Eukaryota"/>
</dbReference>
<dbReference type="HOGENOM" id="CLU_897192_0_0_1"/>
<dbReference type="InParanoid" id="P0CO74"/>
<dbReference type="OMA" id="KHSAGHA"/>
<dbReference type="OrthoDB" id="344220at2759"/>
<dbReference type="Proteomes" id="UP000002149">
    <property type="component" value="Chromosome 1"/>
</dbReference>
<dbReference type="GO" id="GO:0070847">
    <property type="term" value="C:core mediator complex"/>
    <property type="evidence" value="ECO:0000318"/>
    <property type="project" value="GO_Central"/>
</dbReference>
<dbReference type="GO" id="GO:0016592">
    <property type="term" value="C:mediator complex"/>
    <property type="evidence" value="ECO:0000318"/>
    <property type="project" value="GO_Central"/>
</dbReference>
<dbReference type="GO" id="GO:0003713">
    <property type="term" value="F:transcription coactivator activity"/>
    <property type="evidence" value="ECO:0000318"/>
    <property type="project" value="GO_Central"/>
</dbReference>
<dbReference type="GO" id="GO:0006357">
    <property type="term" value="P:regulation of transcription by RNA polymerase II"/>
    <property type="evidence" value="ECO:0000318"/>
    <property type="project" value="GO_Central"/>
</dbReference>
<dbReference type="Gene3D" id="3.10.450.580">
    <property type="entry name" value="Mediator complex, subunit Med6"/>
    <property type="match status" value="1"/>
</dbReference>
<dbReference type="InterPro" id="IPR007018">
    <property type="entry name" value="Mediator_Med6"/>
</dbReference>
<dbReference type="InterPro" id="IPR038566">
    <property type="entry name" value="Mediator_Med6_sf"/>
</dbReference>
<dbReference type="PANTHER" id="PTHR13104">
    <property type="entry name" value="MED-6-RELATED"/>
    <property type="match status" value="1"/>
</dbReference>
<dbReference type="Pfam" id="PF04934">
    <property type="entry name" value="Med6"/>
    <property type="match status" value="1"/>
</dbReference>
<reference key="1">
    <citation type="journal article" date="2005" name="Science">
        <title>The genome of the basidiomycetous yeast and human pathogen Cryptococcus neoformans.</title>
        <authorList>
            <person name="Loftus B.J."/>
            <person name="Fung E."/>
            <person name="Roncaglia P."/>
            <person name="Rowley D."/>
            <person name="Amedeo P."/>
            <person name="Bruno D."/>
            <person name="Vamathevan J."/>
            <person name="Miranda M."/>
            <person name="Anderson I.J."/>
            <person name="Fraser J.A."/>
            <person name="Allen J.E."/>
            <person name="Bosdet I.E."/>
            <person name="Brent M.R."/>
            <person name="Chiu R."/>
            <person name="Doering T.L."/>
            <person name="Donlin M.J."/>
            <person name="D'Souza C.A."/>
            <person name="Fox D.S."/>
            <person name="Grinberg V."/>
            <person name="Fu J."/>
            <person name="Fukushima M."/>
            <person name="Haas B.J."/>
            <person name="Huang J.C."/>
            <person name="Janbon G."/>
            <person name="Jones S.J.M."/>
            <person name="Koo H.L."/>
            <person name="Krzywinski M.I."/>
            <person name="Kwon-Chung K.J."/>
            <person name="Lengeler K.B."/>
            <person name="Maiti R."/>
            <person name="Marra M.A."/>
            <person name="Marra R.E."/>
            <person name="Mathewson C.A."/>
            <person name="Mitchell T.G."/>
            <person name="Pertea M."/>
            <person name="Riggs F.R."/>
            <person name="Salzberg S.L."/>
            <person name="Schein J.E."/>
            <person name="Shvartsbeyn A."/>
            <person name="Shin H."/>
            <person name="Shumway M."/>
            <person name="Specht C.A."/>
            <person name="Suh B.B."/>
            <person name="Tenney A."/>
            <person name="Utterback T.R."/>
            <person name="Wickes B.L."/>
            <person name="Wortman J.R."/>
            <person name="Wye N.H."/>
            <person name="Kronstad J.W."/>
            <person name="Lodge J.K."/>
            <person name="Heitman J."/>
            <person name="Davis R.W."/>
            <person name="Fraser C.M."/>
            <person name="Hyman R.W."/>
        </authorList>
    </citation>
    <scope>NUCLEOTIDE SEQUENCE [LARGE SCALE GENOMIC DNA]</scope>
    <source>
        <strain>JEC21 / ATCC MYA-565</strain>
    </source>
</reference>
<gene>
    <name type="primary">MED6</name>
    <name type="ordered locus">CNA03340</name>
</gene>
<protein>
    <recommendedName>
        <fullName>Mediator of RNA polymerase II transcription subunit 6</fullName>
    </recommendedName>
    <alternativeName>
        <fullName>Mediator complex subunit 6</fullName>
    </alternativeName>
</protein>